<dbReference type="EMBL" id="AAFI02000056">
    <property type="protein sequence ID" value="EAL65602.1"/>
    <property type="molecule type" value="Genomic_DNA"/>
</dbReference>
<dbReference type="RefSeq" id="XP_638956.1">
    <property type="nucleotide sequence ID" value="XM_633864.1"/>
</dbReference>
<dbReference type="SMR" id="Q54QR7"/>
<dbReference type="STRING" id="44689.Q54QR7"/>
<dbReference type="PaxDb" id="44689-DDB0238428"/>
<dbReference type="EnsemblProtists" id="EAL65602">
    <property type="protein sequence ID" value="EAL65602"/>
    <property type="gene ID" value="DDB_G0283671"/>
</dbReference>
<dbReference type="GeneID" id="8624196"/>
<dbReference type="KEGG" id="ddi:DDB_G0283671"/>
<dbReference type="dictyBase" id="DDB_G0283671">
    <property type="gene designation" value="grn"/>
</dbReference>
<dbReference type="VEuPathDB" id="AmoebaDB:DDB_G0283671"/>
<dbReference type="eggNOG" id="KOG4296">
    <property type="taxonomic scope" value="Eukaryota"/>
</dbReference>
<dbReference type="HOGENOM" id="CLU_1942028_0_0_1"/>
<dbReference type="InParanoid" id="Q54QR7"/>
<dbReference type="OMA" id="YACCPTP"/>
<dbReference type="PhylomeDB" id="Q54QR7"/>
<dbReference type="PRO" id="PR:Q54QR7"/>
<dbReference type="Proteomes" id="UP000002195">
    <property type="component" value="Chromosome 4"/>
</dbReference>
<dbReference type="GO" id="GO:0005576">
    <property type="term" value="C:extracellular region"/>
    <property type="evidence" value="ECO:0007669"/>
    <property type="project" value="UniProtKB-SubCell"/>
</dbReference>
<dbReference type="Gene3D" id="2.10.25.160">
    <property type="entry name" value="Granulin"/>
    <property type="match status" value="1"/>
</dbReference>
<dbReference type="InterPro" id="IPR000118">
    <property type="entry name" value="Granulin"/>
</dbReference>
<dbReference type="InterPro" id="IPR039036">
    <property type="entry name" value="Granulin_fam"/>
</dbReference>
<dbReference type="InterPro" id="IPR037277">
    <property type="entry name" value="Granulin_sf"/>
</dbReference>
<dbReference type="PANTHER" id="PTHR12274">
    <property type="entry name" value="GRANULIN"/>
    <property type="match status" value="1"/>
</dbReference>
<dbReference type="PANTHER" id="PTHR12274:SF7">
    <property type="entry name" value="GRANULINS"/>
    <property type="match status" value="1"/>
</dbReference>
<dbReference type="Pfam" id="PF00396">
    <property type="entry name" value="Granulin"/>
    <property type="match status" value="1"/>
</dbReference>
<dbReference type="SMART" id="SM00277">
    <property type="entry name" value="GRAN"/>
    <property type="match status" value="1"/>
</dbReference>
<dbReference type="SUPFAM" id="SSF57277">
    <property type="entry name" value="Granulin repeat"/>
    <property type="match status" value="1"/>
</dbReference>
<dbReference type="PROSITE" id="PS00799">
    <property type="entry name" value="GRANULINS"/>
    <property type="match status" value="1"/>
</dbReference>
<protein>
    <recommendedName>
        <fullName>Granulin</fullName>
    </recommendedName>
</protein>
<keyword id="KW-1015">Disulfide bond</keyword>
<keyword id="KW-1185">Reference proteome</keyword>
<keyword id="KW-0964">Secreted</keyword>
<keyword id="KW-0732">Signal</keyword>
<name>GRN_DICDI</name>
<feature type="signal peptide" evidence="2">
    <location>
        <begin position="1"/>
        <end position="26"/>
    </location>
</feature>
<feature type="chain" id="PRO_0000386629" description="Granulin">
    <location>
        <begin position="27"/>
        <end position="130"/>
    </location>
</feature>
<feature type="disulfide bond" evidence="1">
    <location>
        <begin position="67"/>
        <end position="79"/>
    </location>
</feature>
<feature type="disulfide bond" evidence="1">
    <location>
        <begin position="73"/>
        <end position="89"/>
    </location>
</feature>
<reference key="1">
    <citation type="journal article" date="2005" name="Nature">
        <title>The genome of the social amoeba Dictyostelium discoideum.</title>
        <authorList>
            <person name="Eichinger L."/>
            <person name="Pachebat J.A."/>
            <person name="Gloeckner G."/>
            <person name="Rajandream M.A."/>
            <person name="Sucgang R."/>
            <person name="Berriman M."/>
            <person name="Song J."/>
            <person name="Olsen R."/>
            <person name="Szafranski K."/>
            <person name="Xu Q."/>
            <person name="Tunggal B."/>
            <person name="Kummerfeld S."/>
            <person name="Madera M."/>
            <person name="Konfortov B.A."/>
            <person name="Rivero F."/>
            <person name="Bankier A.T."/>
            <person name="Lehmann R."/>
            <person name="Hamlin N."/>
            <person name="Davies R."/>
            <person name="Gaudet P."/>
            <person name="Fey P."/>
            <person name="Pilcher K."/>
            <person name="Chen G."/>
            <person name="Saunders D."/>
            <person name="Sodergren E.J."/>
            <person name="Davis P."/>
            <person name="Kerhornou A."/>
            <person name="Nie X."/>
            <person name="Hall N."/>
            <person name="Anjard C."/>
            <person name="Hemphill L."/>
            <person name="Bason N."/>
            <person name="Farbrother P."/>
            <person name="Desany B."/>
            <person name="Just E."/>
            <person name="Morio T."/>
            <person name="Rost R."/>
            <person name="Churcher C.M."/>
            <person name="Cooper J."/>
            <person name="Haydock S."/>
            <person name="van Driessche N."/>
            <person name="Cronin A."/>
            <person name="Goodhead I."/>
            <person name="Muzny D.M."/>
            <person name="Mourier T."/>
            <person name="Pain A."/>
            <person name="Lu M."/>
            <person name="Harper D."/>
            <person name="Lindsay R."/>
            <person name="Hauser H."/>
            <person name="James K.D."/>
            <person name="Quiles M."/>
            <person name="Madan Babu M."/>
            <person name="Saito T."/>
            <person name="Buchrieser C."/>
            <person name="Wardroper A."/>
            <person name="Felder M."/>
            <person name="Thangavelu M."/>
            <person name="Johnson D."/>
            <person name="Knights A."/>
            <person name="Loulseged H."/>
            <person name="Mungall K.L."/>
            <person name="Oliver K."/>
            <person name="Price C."/>
            <person name="Quail M.A."/>
            <person name="Urushihara H."/>
            <person name="Hernandez J."/>
            <person name="Rabbinowitsch E."/>
            <person name="Steffen D."/>
            <person name="Sanders M."/>
            <person name="Ma J."/>
            <person name="Kohara Y."/>
            <person name="Sharp S."/>
            <person name="Simmonds M.N."/>
            <person name="Spiegler S."/>
            <person name="Tivey A."/>
            <person name="Sugano S."/>
            <person name="White B."/>
            <person name="Walker D."/>
            <person name="Woodward J.R."/>
            <person name="Winckler T."/>
            <person name="Tanaka Y."/>
            <person name="Shaulsky G."/>
            <person name="Schleicher M."/>
            <person name="Weinstock G.M."/>
            <person name="Rosenthal A."/>
            <person name="Cox E.C."/>
            <person name="Chisholm R.L."/>
            <person name="Gibbs R.A."/>
            <person name="Loomis W.F."/>
            <person name="Platzer M."/>
            <person name="Kay R.R."/>
            <person name="Williams J.G."/>
            <person name="Dear P.H."/>
            <person name="Noegel A.A."/>
            <person name="Barrell B.G."/>
            <person name="Kuspa A."/>
        </authorList>
    </citation>
    <scope>NUCLEOTIDE SEQUENCE [LARGE SCALE GENOMIC DNA]</scope>
    <source>
        <strain>AX4</strain>
    </source>
</reference>
<sequence>MNYSKIFIFGIISLILMALFSSTVESVSLKNLKIKNNNNNNNNIENKHKTKKSLELTETQDFGSVKCPDGSLCPNSNTCCSASDGSYACCPTPNAQCCSDKQHCCPYQFTCGNGGNICKPQQGLRFSFNR</sequence>
<gene>
    <name type="primary">grn</name>
    <name type="ORF">DDB_G0283671</name>
</gene>
<accession>Q54QR7</accession>
<proteinExistence type="inferred from homology"/>
<evidence type="ECO:0000250" key="1"/>
<evidence type="ECO:0000255" key="2"/>
<evidence type="ECO:0000305" key="3"/>
<comment type="subcellular location">
    <subcellularLocation>
        <location evidence="3">Secreted</location>
    </subcellularLocation>
</comment>
<comment type="PTM">
    <text evidence="1">Granulins are disulfide bridged.</text>
</comment>
<comment type="similarity">
    <text evidence="3">Belongs to the granulin family.</text>
</comment>
<organism>
    <name type="scientific">Dictyostelium discoideum</name>
    <name type="common">Social amoeba</name>
    <dbReference type="NCBI Taxonomy" id="44689"/>
    <lineage>
        <taxon>Eukaryota</taxon>
        <taxon>Amoebozoa</taxon>
        <taxon>Evosea</taxon>
        <taxon>Eumycetozoa</taxon>
        <taxon>Dictyostelia</taxon>
        <taxon>Dictyosteliales</taxon>
        <taxon>Dictyosteliaceae</taxon>
        <taxon>Dictyostelium</taxon>
    </lineage>
</organism>